<feature type="chain" id="PRO_0000351129" description="Tubby-like F-box protein 10">
    <location>
        <begin position="1"/>
        <end position="352"/>
    </location>
</feature>
<feature type="domain" description="F-box">
    <location>
        <begin position="22"/>
        <end position="78"/>
    </location>
</feature>
<feature type="region of interest" description="Disordered" evidence="1">
    <location>
        <begin position="1"/>
        <end position="23"/>
    </location>
</feature>
<feature type="compositionally biased region" description="Basic and acidic residues" evidence="1">
    <location>
        <begin position="1"/>
        <end position="11"/>
    </location>
</feature>
<dbReference type="EMBL" id="AC113333">
    <property type="protein sequence ID" value="AAU10642.1"/>
    <property type="molecule type" value="Genomic_DNA"/>
</dbReference>
<dbReference type="EMBL" id="AP008211">
    <property type="protein sequence ID" value="BAF18222.2"/>
    <property type="status" value="ALT_SEQ"/>
    <property type="molecule type" value="Genomic_DNA"/>
</dbReference>
<dbReference type="EMBL" id="AP014961">
    <property type="protein sequence ID" value="BAS95313.1"/>
    <property type="molecule type" value="Genomic_DNA"/>
</dbReference>
<dbReference type="EMBL" id="CM000142">
    <property type="status" value="NOT_ANNOTATED_CDS"/>
    <property type="molecule type" value="Genomic_DNA"/>
</dbReference>
<dbReference type="RefSeq" id="XP_015639807.1">
    <property type="nucleotide sequence ID" value="XM_015784321.1"/>
</dbReference>
<dbReference type="SMR" id="Q688Y7"/>
<dbReference type="FunCoup" id="Q688Y7">
    <property type="interactions" value="1473"/>
</dbReference>
<dbReference type="STRING" id="39947.Q688Y7"/>
<dbReference type="PaxDb" id="39947-Q688Y7"/>
<dbReference type="EnsemblPlants" id="Os05t0560400-00">
    <property type="protein sequence ID" value="Os05t0560400-00"/>
    <property type="gene ID" value="Os05g0560400"/>
</dbReference>
<dbReference type="Gramene" id="Os05t0560400-00">
    <property type="protein sequence ID" value="Os05t0560400-00"/>
    <property type="gene ID" value="Os05g0560400"/>
</dbReference>
<dbReference type="KEGG" id="dosa:Os05g0560400"/>
<dbReference type="eggNOG" id="KOG2502">
    <property type="taxonomic scope" value="Eukaryota"/>
</dbReference>
<dbReference type="HOGENOM" id="CLU_028236_3_0_1"/>
<dbReference type="InParanoid" id="Q688Y7"/>
<dbReference type="OMA" id="MFQINED"/>
<dbReference type="OrthoDB" id="8775810at2759"/>
<dbReference type="Proteomes" id="UP000000763">
    <property type="component" value="Chromosome 5"/>
</dbReference>
<dbReference type="Proteomes" id="UP000007752">
    <property type="component" value="Chromosome 5"/>
</dbReference>
<dbReference type="Proteomes" id="UP000059680">
    <property type="component" value="Chromosome 5"/>
</dbReference>
<dbReference type="Gene3D" id="3.20.90.10">
    <property type="entry name" value="Tubby Protein, Chain A"/>
    <property type="match status" value="1"/>
</dbReference>
<dbReference type="InterPro" id="IPR036047">
    <property type="entry name" value="F-box-like_dom_sf"/>
</dbReference>
<dbReference type="InterPro" id="IPR025659">
    <property type="entry name" value="Tubby-like_C"/>
</dbReference>
<dbReference type="InterPro" id="IPR000007">
    <property type="entry name" value="Tubby_C"/>
</dbReference>
<dbReference type="InterPro" id="IPR018066">
    <property type="entry name" value="Tubby_C_CS"/>
</dbReference>
<dbReference type="PANTHER" id="PTHR16517:SF155">
    <property type="entry name" value="TUBBY-LIKE F-BOX PROTEIN 10"/>
    <property type="match status" value="1"/>
</dbReference>
<dbReference type="PANTHER" id="PTHR16517">
    <property type="entry name" value="TUBBY-RELATED"/>
    <property type="match status" value="1"/>
</dbReference>
<dbReference type="Pfam" id="PF01167">
    <property type="entry name" value="Tub"/>
    <property type="match status" value="1"/>
</dbReference>
<dbReference type="PRINTS" id="PR01573">
    <property type="entry name" value="SUPERTUBBY"/>
</dbReference>
<dbReference type="SUPFAM" id="SSF81383">
    <property type="entry name" value="F-box domain"/>
    <property type="match status" value="1"/>
</dbReference>
<dbReference type="SUPFAM" id="SSF54518">
    <property type="entry name" value="Tubby C-terminal domain-like"/>
    <property type="match status" value="1"/>
</dbReference>
<dbReference type="PROSITE" id="PS01200">
    <property type="entry name" value="TUB_1"/>
    <property type="match status" value="1"/>
</dbReference>
<dbReference type="PROSITE" id="PS01201">
    <property type="entry name" value="TUB_2"/>
    <property type="match status" value="1"/>
</dbReference>
<protein>
    <recommendedName>
        <fullName>Tubby-like F-box protein 10</fullName>
        <shortName>OsTLP10</shortName>
    </recommendedName>
    <alternativeName>
        <fullName>Tubby-like F-box protein 11</fullName>
        <shortName>OsTLP11</shortName>
    </alternativeName>
</protein>
<keyword id="KW-1185">Reference proteome</keyword>
<sequence>MAAVREPREEAAVGEGEGEEEGRWGGLLPELVEEVVRRVEASGGERWPARKDLVSCACVCRRWREAAAAVVRPLPESGRITFPSSLKQPGPKDFPIQCFVKRNKKKSMFYLYLGLLNGTMDKGKFLMAARRFRRGPHTEYVISLDADDLSQGSNAYVGKLRSDFWGTNFKIYDNQPPYDDAKTSSTRSSQRFGSTHRFGSRRICPQISAGNFNVGQISYKYNLLKSRGPRRMFCTMECPSTQETWENSLKTKSLRCTGTTVLRNKAPRWHEHLQCWCLNFHGRVTVASVKNFQLVATADPSHPDSVGDEETVILQFGKVDSNIFTMDYRQPLSAFQAFAICLSSFGTKLACE</sequence>
<organism>
    <name type="scientific">Oryza sativa subsp. japonica</name>
    <name type="common">Rice</name>
    <dbReference type="NCBI Taxonomy" id="39947"/>
    <lineage>
        <taxon>Eukaryota</taxon>
        <taxon>Viridiplantae</taxon>
        <taxon>Streptophyta</taxon>
        <taxon>Embryophyta</taxon>
        <taxon>Tracheophyta</taxon>
        <taxon>Spermatophyta</taxon>
        <taxon>Magnoliopsida</taxon>
        <taxon>Liliopsida</taxon>
        <taxon>Poales</taxon>
        <taxon>Poaceae</taxon>
        <taxon>BOP clade</taxon>
        <taxon>Oryzoideae</taxon>
        <taxon>Oryzeae</taxon>
        <taxon>Oryzinae</taxon>
        <taxon>Oryza</taxon>
        <taxon>Oryza sativa</taxon>
    </lineage>
</organism>
<accession>Q688Y7</accession>
<accession>A0A0N7KL85</accession>
<accession>A3B6R9</accession>
<reference key="1">
    <citation type="journal article" date="2005" name="Mol. Genet. Genomics">
        <title>A fine physical map of the rice chromosome 5.</title>
        <authorList>
            <person name="Cheng C.-H."/>
            <person name="Chung M.C."/>
            <person name="Liu S.-M."/>
            <person name="Chen S.-K."/>
            <person name="Kao F.Y."/>
            <person name="Lin S.-J."/>
            <person name="Hsiao S.-H."/>
            <person name="Tseng I.C."/>
            <person name="Hsing Y.-I.C."/>
            <person name="Wu H.-P."/>
            <person name="Chen C.-S."/>
            <person name="Shaw J.-F."/>
            <person name="Wu J."/>
            <person name="Matsumoto T."/>
            <person name="Sasaki T."/>
            <person name="Chen H.-C."/>
            <person name="Chow T.-Y."/>
        </authorList>
    </citation>
    <scope>NUCLEOTIDE SEQUENCE [LARGE SCALE GENOMIC DNA]</scope>
    <source>
        <strain>cv. Nipponbare</strain>
    </source>
</reference>
<reference key="2">
    <citation type="journal article" date="2005" name="Nature">
        <title>The map-based sequence of the rice genome.</title>
        <authorList>
            <consortium name="International rice genome sequencing project (IRGSP)"/>
        </authorList>
    </citation>
    <scope>NUCLEOTIDE SEQUENCE [LARGE SCALE GENOMIC DNA]</scope>
    <source>
        <strain>cv. Nipponbare</strain>
    </source>
</reference>
<reference key="3">
    <citation type="journal article" date="2008" name="Nucleic Acids Res.">
        <title>The rice annotation project database (RAP-DB): 2008 update.</title>
        <authorList>
            <consortium name="The rice annotation project (RAP)"/>
        </authorList>
    </citation>
    <scope>GENOME REANNOTATION</scope>
    <source>
        <strain>cv. Nipponbare</strain>
    </source>
</reference>
<reference key="4">
    <citation type="journal article" date="2013" name="Rice">
        <title>Improvement of the Oryza sativa Nipponbare reference genome using next generation sequence and optical map data.</title>
        <authorList>
            <person name="Kawahara Y."/>
            <person name="de la Bastide M."/>
            <person name="Hamilton J.P."/>
            <person name="Kanamori H."/>
            <person name="McCombie W.R."/>
            <person name="Ouyang S."/>
            <person name="Schwartz D.C."/>
            <person name="Tanaka T."/>
            <person name="Wu J."/>
            <person name="Zhou S."/>
            <person name="Childs K.L."/>
            <person name="Davidson R.M."/>
            <person name="Lin H."/>
            <person name="Quesada-Ocampo L."/>
            <person name="Vaillancourt B."/>
            <person name="Sakai H."/>
            <person name="Lee S.S."/>
            <person name="Kim J."/>
            <person name="Numa H."/>
            <person name="Itoh T."/>
            <person name="Buell C.R."/>
            <person name="Matsumoto T."/>
        </authorList>
    </citation>
    <scope>GENOME REANNOTATION</scope>
    <source>
        <strain>cv. Nipponbare</strain>
    </source>
</reference>
<reference key="5">
    <citation type="journal article" date="2005" name="PLoS Biol.">
        <title>The genomes of Oryza sativa: a history of duplications.</title>
        <authorList>
            <person name="Yu J."/>
            <person name="Wang J."/>
            <person name="Lin W."/>
            <person name="Li S."/>
            <person name="Li H."/>
            <person name="Zhou J."/>
            <person name="Ni P."/>
            <person name="Dong W."/>
            <person name="Hu S."/>
            <person name="Zeng C."/>
            <person name="Zhang J."/>
            <person name="Zhang Y."/>
            <person name="Li R."/>
            <person name="Xu Z."/>
            <person name="Li S."/>
            <person name="Li X."/>
            <person name="Zheng H."/>
            <person name="Cong L."/>
            <person name="Lin L."/>
            <person name="Yin J."/>
            <person name="Geng J."/>
            <person name="Li G."/>
            <person name="Shi J."/>
            <person name="Liu J."/>
            <person name="Lv H."/>
            <person name="Li J."/>
            <person name="Wang J."/>
            <person name="Deng Y."/>
            <person name="Ran L."/>
            <person name="Shi X."/>
            <person name="Wang X."/>
            <person name="Wu Q."/>
            <person name="Li C."/>
            <person name="Ren X."/>
            <person name="Wang J."/>
            <person name="Wang X."/>
            <person name="Li D."/>
            <person name="Liu D."/>
            <person name="Zhang X."/>
            <person name="Ji Z."/>
            <person name="Zhao W."/>
            <person name="Sun Y."/>
            <person name="Zhang Z."/>
            <person name="Bao J."/>
            <person name="Han Y."/>
            <person name="Dong L."/>
            <person name="Ji J."/>
            <person name="Chen P."/>
            <person name="Wu S."/>
            <person name="Liu J."/>
            <person name="Xiao Y."/>
            <person name="Bu D."/>
            <person name="Tan J."/>
            <person name="Yang L."/>
            <person name="Ye C."/>
            <person name="Zhang J."/>
            <person name="Xu J."/>
            <person name="Zhou Y."/>
            <person name="Yu Y."/>
            <person name="Zhang B."/>
            <person name="Zhuang S."/>
            <person name="Wei H."/>
            <person name="Liu B."/>
            <person name="Lei M."/>
            <person name="Yu H."/>
            <person name="Li Y."/>
            <person name="Xu H."/>
            <person name="Wei S."/>
            <person name="He X."/>
            <person name="Fang L."/>
            <person name="Zhang Z."/>
            <person name="Zhang Y."/>
            <person name="Huang X."/>
            <person name="Su Z."/>
            <person name="Tong W."/>
            <person name="Li J."/>
            <person name="Tong Z."/>
            <person name="Li S."/>
            <person name="Ye J."/>
            <person name="Wang L."/>
            <person name="Fang L."/>
            <person name="Lei T."/>
            <person name="Chen C.-S."/>
            <person name="Chen H.-C."/>
            <person name="Xu Z."/>
            <person name="Li H."/>
            <person name="Huang H."/>
            <person name="Zhang F."/>
            <person name="Xu H."/>
            <person name="Li N."/>
            <person name="Zhao C."/>
            <person name="Li S."/>
            <person name="Dong L."/>
            <person name="Huang Y."/>
            <person name="Li L."/>
            <person name="Xi Y."/>
            <person name="Qi Q."/>
            <person name="Li W."/>
            <person name="Zhang B."/>
            <person name="Hu W."/>
            <person name="Zhang Y."/>
            <person name="Tian X."/>
            <person name="Jiao Y."/>
            <person name="Liang X."/>
            <person name="Jin J."/>
            <person name="Gao L."/>
            <person name="Zheng W."/>
            <person name="Hao B."/>
            <person name="Liu S.-M."/>
            <person name="Wang W."/>
            <person name="Yuan L."/>
            <person name="Cao M."/>
            <person name="McDermott J."/>
            <person name="Samudrala R."/>
            <person name="Wang J."/>
            <person name="Wong G.K.-S."/>
            <person name="Yang H."/>
        </authorList>
    </citation>
    <scope>NUCLEOTIDE SEQUENCE [LARGE SCALE GENOMIC DNA]</scope>
    <source>
        <strain>cv. Nipponbare</strain>
    </source>
</reference>
<reference key="6">
    <citation type="journal article" date="2008" name="FEBS J.">
        <title>Identification of rice TUBBY-like genes and their evolution.</title>
        <authorList>
            <person name="Liu Q."/>
        </authorList>
    </citation>
    <scope>GENE FAMILY</scope>
    <scope>NOMENCLATURE</scope>
</reference>
<reference key="7">
    <citation type="journal article" date="2008" name="Genomics">
        <title>Genomewide comparative phylogenetic and molecular evolutionary analysis of tubby-like protein family in Arabidopsis, rice, and poplar.</title>
        <authorList>
            <person name="Yang Z."/>
            <person name="Zhou Y."/>
            <person name="Wang X."/>
            <person name="Gu S."/>
            <person name="Yu J."/>
            <person name="Liang G."/>
            <person name="Yan C."/>
            <person name="Xu C."/>
        </authorList>
    </citation>
    <scope>TISSUE SPECIFICITY</scope>
    <scope>GENE FAMILY</scope>
    <scope>NOMENCLATURE</scope>
</reference>
<evidence type="ECO:0000256" key="1">
    <source>
        <dbReference type="SAM" id="MobiDB-lite"/>
    </source>
</evidence>
<evidence type="ECO:0000269" key="2">
    <source>
    </source>
</evidence>
<evidence type="ECO:0000305" key="3"/>
<name>TLP10_ORYSJ</name>
<gene>
    <name type="primary">TULP10</name>
    <name type="synonym">TULP11</name>
    <name type="ordered locus">Os05g0560400</name>
    <name type="ordered locus">LOC_Os05g48670</name>
    <name type="ORF">OJ1115_B06.6</name>
</gene>
<comment type="tissue specificity">
    <text evidence="2">Ubiquitous.</text>
</comment>
<comment type="similarity">
    <text evidence="3">Belongs to the TUB family.</text>
</comment>
<comment type="sequence caution" evidence="3">
    <conflict type="erroneous gene model prediction">
        <sequence resource="EMBL-CDS" id="BAF18222"/>
    </conflict>
</comment>
<proteinExistence type="evidence at transcript level"/>